<proteinExistence type="evidence at protein level"/>
<keyword id="KW-0342">GTP-binding</keyword>
<keyword id="KW-0396">Initiation factor</keyword>
<keyword id="KW-0496">Mitochondrion</keyword>
<keyword id="KW-0547">Nucleotide-binding</keyword>
<keyword id="KW-0648">Protein biosynthesis</keyword>
<keyword id="KW-1185">Reference proteome</keyword>
<keyword id="KW-0809">Transit peptide</keyword>
<dbReference type="EMBL" id="X58379">
    <property type="protein sequence ID" value="CAA41268.1"/>
    <property type="molecule type" value="Genomic_DNA"/>
</dbReference>
<dbReference type="EMBL" id="Z74765">
    <property type="protein sequence ID" value="CAA99023.1"/>
    <property type="molecule type" value="Genomic_DNA"/>
</dbReference>
<dbReference type="EMBL" id="BK006948">
    <property type="protein sequence ID" value="DAA10758.1"/>
    <property type="molecule type" value="Genomic_DNA"/>
</dbReference>
<dbReference type="PIR" id="S66706">
    <property type="entry name" value="S66706"/>
</dbReference>
<dbReference type="RefSeq" id="NP_014619.1">
    <property type="nucleotide sequence ID" value="NM_001183277.1"/>
</dbReference>
<dbReference type="SMR" id="P25038"/>
<dbReference type="BioGRID" id="34378">
    <property type="interactions" value="306"/>
</dbReference>
<dbReference type="FunCoup" id="P25038">
    <property type="interactions" value="599"/>
</dbReference>
<dbReference type="IntAct" id="P25038">
    <property type="interactions" value="12"/>
</dbReference>
<dbReference type="STRING" id="4932.YOL023W"/>
<dbReference type="PaxDb" id="4932-YOL023W"/>
<dbReference type="PeptideAtlas" id="P25038"/>
<dbReference type="EnsemblFungi" id="YOL023W_mRNA">
    <property type="protein sequence ID" value="YOL023W"/>
    <property type="gene ID" value="YOL023W"/>
</dbReference>
<dbReference type="GeneID" id="854135"/>
<dbReference type="KEGG" id="sce:YOL023W"/>
<dbReference type="AGR" id="SGD:S000005383"/>
<dbReference type="SGD" id="S000005383">
    <property type="gene designation" value="IFM1"/>
</dbReference>
<dbReference type="VEuPathDB" id="FungiDB:YOL023W"/>
<dbReference type="eggNOG" id="KOG1145">
    <property type="taxonomic scope" value="Eukaryota"/>
</dbReference>
<dbReference type="GeneTree" id="ENSGT00940000162583"/>
<dbReference type="HOGENOM" id="CLU_006301_10_2_1"/>
<dbReference type="InParanoid" id="P25038"/>
<dbReference type="OMA" id="RKNPWMN"/>
<dbReference type="OrthoDB" id="361630at2759"/>
<dbReference type="BioCyc" id="YEAST:G3O-33439-MONOMER"/>
<dbReference type="BioGRID-ORCS" id="854135">
    <property type="hits" value="2 hits in 10 CRISPR screens"/>
</dbReference>
<dbReference type="PRO" id="PR:P25038"/>
<dbReference type="Proteomes" id="UP000002311">
    <property type="component" value="Chromosome XV"/>
</dbReference>
<dbReference type="RNAct" id="P25038">
    <property type="molecule type" value="protein"/>
</dbReference>
<dbReference type="GO" id="GO:0071944">
    <property type="term" value="C:cell periphery"/>
    <property type="evidence" value="ECO:0007005"/>
    <property type="project" value="SGD"/>
</dbReference>
<dbReference type="GO" id="GO:0005737">
    <property type="term" value="C:cytoplasm"/>
    <property type="evidence" value="ECO:0000318"/>
    <property type="project" value="GO_Central"/>
</dbReference>
<dbReference type="GO" id="GO:0005739">
    <property type="term" value="C:mitochondrion"/>
    <property type="evidence" value="ECO:0000315"/>
    <property type="project" value="SGD"/>
</dbReference>
<dbReference type="GO" id="GO:0005634">
    <property type="term" value="C:nucleus"/>
    <property type="evidence" value="ECO:0007005"/>
    <property type="project" value="SGD"/>
</dbReference>
<dbReference type="GO" id="GO:0005525">
    <property type="term" value="F:GTP binding"/>
    <property type="evidence" value="ECO:0007669"/>
    <property type="project" value="UniProtKB-KW"/>
</dbReference>
<dbReference type="GO" id="GO:0003924">
    <property type="term" value="F:GTPase activity"/>
    <property type="evidence" value="ECO:0000314"/>
    <property type="project" value="SGD"/>
</dbReference>
<dbReference type="GO" id="GO:0003743">
    <property type="term" value="F:translation initiation factor activity"/>
    <property type="evidence" value="ECO:0000314"/>
    <property type="project" value="SGD"/>
</dbReference>
<dbReference type="GO" id="GO:0000049">
    <property type="term" value="F:tRNA binding"/>
    <property type="evidence" value="ECO:0000314"/>
    <property type="project" value="SGD"/>
</dbReference>
<dbReference type="GO" id="GO:0032543">
    <property type="term" value="P:mitochondrial translation"/>
    <property type="evidence" value="ECO:0000315"/>
    <property type="project" value="SGD"/>
</dbReference>
<dbReference type="GO" id="GO:0070124">
    <property type="term" value="P:mitochondrial translational initiation"/>
    <property type="evidence" value="ECO:0000318"/>
    <property type="project" value="GO_Central"/>
</dbReference>
<dbReference type="GO" id="GO:0006413">
    <property type="term" value="P:translational initiation"/>
    <property type="evidence" value="ECO:0000247"/>
    <property type="project" value="SGD"/>
</dbReference>
<dbReference type="CDD" id="cd01887">
    <property type="entry name" value="IF2_eIF5B"/>
    <property type="match status" value="1"/>
</dbReference>
<dbReference type="CDD" id="cd03702">
    <property type="entry name" value="IF2_mtIF2_II"/>
    <property type="match status" value="1"/>
</dbReference>
<dbReference type="CDD" id="cd03692">
    <property type="entry name" value="mtIF2_IVc"/>
    <property type="match status" value="1"/>
</dbReference>
<dbReference type="FunFam" id="2.40.30.10:FF:000126">
    <property type="entry name" value="Mitochondrial translation initiation factor"/>
    <property type="match status" value="1"/>
</dbReference>
<dbReference type="FunFam" id="2.40.30.10:FF:000008">
    <property type="entry name" value="Translation initiation factor IF-2"/>
    <property type="match status" value="1"/>
</dbReference>
<dbReference type="FunFam" id="3.40.50.10050:FF:000001">
    <property type="entry name" value="Translation initiation factor IF-2"/>
    <property type="match status" value="1"/>
</dbReference>
<dbReference type="FunFam" id="3.40.50.300:FF:000019">
    <property type="entry name" value="Translation initiation factor IF-2"/>
    <property type="match status" value="1"/>
</dbReference>
<dbReference type="Gene3D" id="3.40.50.300">
    <property type="entry name" value="P-loop containing nucleotide triphosphate hydrolases"/>
    <property type="match status" value="1"/>
</dbReference>
<dbReference type="Gene3D" id="2.40.30.10">
    <property type="entry name" value="Translation factors"/>
    <property type="match status" value="2"/>
</dbReference>
<dbReference type="Gene3D" id="3.40.50.10050">
    <property type="entry name" value="Translation initiation factor IF- 2, domain 3"/>
    <property type="match status" value="1"/>
</dbReference>
<dbReference type="InterPro" id="IPR053905">
    <property type="entry name" value="EF-G-like_DII"/>
</dbReference>
<dbReference type="InterPro" id="IPR044145">
    <property type="entry name" value="IF2_II"/>
</dbReference>
<dbReference type="InterPro" id="IPR006847">
    <property type="entry name" value="IF2_N"/>
</dbReference>
<dbReference type="InterPro" id="IPR027417">
    <property type="entry name" value="P-loop_NTPase"/>
</dbReference>
<dbReference type="InterPro" id="IPR005225">
    <property type="entry name" value="Small_GTP-bd"/>
</dbReference>
<dbReference type="InterPro" id="IPR000795">
    <property type="entry name" value="T_Tr_GTP-bd_dom"/>
</dbReference>
<dbReference type="InterPro" id="IPR000178">
    <property type="entry name" value="TF_IF2_bacterial-like"/>
</dbReference>
<dbReference type="InterPro" id="IPR015760">
    <property type="entry name" value="TIF_IF2"/>
</dbReference>
<dbReference type="InterPro" id="IPR023115">
    <property type="entry name" value="TIF_IF2_dom3"/>
</dbReference>
<dbReference type="InterPro" id="IPR036925">
    <property type="entry name" value="TIF_IF2_dom3_sf"/>
</dbReference>
<dbReference type="InterPro" id="IPR009000">
    <property type="entry name" value="Transl_B-barrel_sf"/>
</dbReference>
<dbReference type="NCBIfam" id="TIGR00487">
    <property type="entry name" value="IF-2"/>
    <property type="match status" value="1"/>
</dbReference>
<dbReference type="NCBIfam" id="TIGR00231">
    <property type="entry name" value="small_GTP"/>
    <property type="match status" value="1"/>
</dbReference>
<dbReference type="PANTHER" id="PTHR43381:SF20">
    <property type="entry name" value="TRANSLATION INITIATION FACTOR IF-2, MITOCHONDRIAL"/>
    <property type="match status" value="1"/>
</dbReference>
<dbReference type="PANTHER" id="PTHR43381">
    <property type="entry name" value="TRANSLATION INITIATION FACTOR IF-2-RELATED"/>
    <property type="match status" value="1"/>
</dbReference>
<dbReference type="Pfam" id="PF22042">
    <property type="entry name" value="EF-G_D2"/>
    <property type="match status" value="1"/>
</dbReference>
<dbReference type="Pfam" id="PF00009">
    <property type="entry name" value="GTP_EFTU"/>
    <property type="match status" value="1"/>
</dbReference>
<dbReference type="Pfam" id="PF11987">
    <property type="entry name" value="IF-2"/>
    <property type="match status" value="1"/>
</dbReference>
<dbReference type="Pfam" id="PF04760">
    <property type="entry name" value="IF2_N"/>
    <property type="match status" value="1"/>
</dbReference>
<dbReference type="SUPFAM" id="SSF52156">
    <property type="entry name" value="Initiation factor IF2/eIF5b, domain 3"/>
    <property type="match status" value="1"/>
</dbReference>
<dbReference type="SUPFAM" id="SSF52540">
    <property type="entry name" value="P-loop containing nucleoside triphosphate hydrolases"/>
    <property type="match status" value="1"/>
</dbReference>
<dbReference type="SUPFAM" id="SSF50447">
    <property type="entry name" value="Translation proteins"/>
    <property type="match status" value="2"/>
</dbReference>
<dbReference type="PROSITE" id="PS51722">
    <property type="entry name" value="G_TR_2"/>
    <property type="match status" value="1"/>
</dbReference>
<dbReference type="PROSITE" id="PS01176">
    <property type="entry name" value="IF2"/>
    <property type="match status" value="1"/>
</dbReference>
<organism>
    <name type="scientific">Saccharomyces cerevisiae (strain ATCC 204508 / S288c)</name>
    <name type="common">Baker's yeast</name>
    <dbReference type="NCBI Taxonomy" id="559292"/>
    <lineage>
        <taxon>Eukaryota</taxon>
        <taxon>Fungi</taxon>
        <taxon>Dikarya</taxon>
        <taxon>Ascomycota</taxon>
        <taxon>Saccharomycotina</taxon>
        <taxon>Saccharomycetes</taxon>
        <taxon>Saccharomycetales</taxon>
        <taxon>Saccharomycetaceae</taxon>
        <taxon>Saccharomyces</taxon>
    </lineage>
</organism>
<reference key="1">
    <citation type="journal article" date="1991" name="Eur. J. Biochem.">
        <title>Mitochondrial translational-initiation and elongation factors in Saccharomyces cerevisiae.</title>
        <authorList>
            <person name="Vambutas A."/>
            <person name="Ackerman S.H."/>
            <person name="Tzagoloff A."/>
        </authorList>
    </citation>
    <scope>NUCLEOTIDE SEQUENCE [GENOMIC DNA]</scope>
</reference>
<reference key="2">
    <citation type="journal article" date="1997" name="Nature">
        <title>The nucleotide sequence of Saccharomyces cerevisiae chromosome XV.</title>
        <authorList>
            <person name="Dujon B."/>
            <person name="Albermann K."/>
            <person name="Aldea M."/>
            <person name="Alexandraki D."/>
            <person name="Ansorge W."/>
            <person name="Arino J."/>
            <person name="Benes V."/>
            <person name="Bohn C."/>
            <person name="Bolotin-Fukuhara M."/>
            <person name="Bordonne R."/>
            <person name="Boyer J."/>
            <person name="Camasses A."/>
            <person name="Casamayor A."/>
            <person name="Casas C."/>
            <person name="Cheret G."/>
            <person name="Cziepluch C."/>
            <person name="Daignan-Fornier B."/>
            <person name="Dang V.-D."/>
            <person name="de Haan M."/>
            <person name="Delius H."/>
            <person name="Durand P."/>
            <person name="Fairhead C."/>
            <person name="Feldmann H."/>
            <person name="Gaillon L."/>
            <person name="Galisson F."/>
            <person name="Gamo F.-J."/>
            <person name="Gancedo C."/>
            <person name="Goffeau A."/>
            <person name="Goulding S.E."/>
            <person name="Grivell L.A."/>
            <person name="Habbig B."/>
            <person name="Hand N.J."/>
            <person name="Hani J."/>
            <person name="Hattenhorst U."/>
            <person name="Hebling U."/>
            <person name="Hernando Y."/>
            <person name="Herrero E."/>
            <person name="Heumann K."/>
            <person name="Hiesel R."/>
            <person name="Hilger F."/>
            <person name="Hofmann B."/>
            <person name="Hollenberg C.P."/>
            <person name="Hughes B."/>
            <person name="Jauniaux J.-C."/>
            <person name="Kalogeropoulos A."/>
            <person name="Katsoulou C."/>
            <person name="Kordes E."/>
            <person name="Lafuente M.J."/>
            <person name="Landt O."/>
            <person name="Louis E.J."/>
            <person name="Maarse A.C."/>
            <person name="Madania A."/>
            <person name="Mannhaupt G."/>
            <person name="Marck C."/>
            <person name="Martin R.P."/>
            <person name="Mewes H.-W."/>
            <person name="Michaux G."/>
            <person name="Paces V."/>
            <person name="Parle-McDermott A.G."/>
            <person name="Pearson B.M."/>
            <person name="Perrin A."/>
            <person name="Pettersson B."/>
            <person name="Poch O."/>
            <person name="Pohl T.M."/>
            <person name="Poirey R."/>
            <person name="Portetelle D."/>
            <person name="Pujol A."/>
            <person name="Purnelle B."/>
            <person name="Ramezani Rad M."/>
            <person name="Rechmann S."/>
            <person name="Schwager C."/>
            <person name="Schweizer M."/>
            <person name="Sor F."/>
            <person name="Sterky F."/>
            <person name="Tarassov I.A."/>
            <person name="Teodoru C."/>
            <person name="Tettelin H."/>
            <person name="Thierry A."/>
            <person name="Tobiasch E."/>
            <person name="Tzermia M."/>
            <person name="Uhlen M."/>
            <person name="Unseld M."/>
            <person name="Valens M."/>
            <person name="Vandenbol M."/>
            <person name="Vetter I."/>
            <person name="Vlcek C."/>
            <person name="Voet M."/>
            <person name="Volckaert G."/>
            <person name="Voss H."/>
            <person name="Wambutt R."/>
            <person name="Wedler H."/>
            <person name="Wiemann S."/>
            <person name="Winsor B."/>
            <person name="Wolfe K.H."/>
            <person name="Zollner A."/>
            <person name="Zumstein E."/>
            <person name="Kleine K."/>
        </authorList>
    </citation>
    <scope>NUCLEOTIDE SEQUENCE [LARGE SCALE GENOMIC DNA]</scope>
    <source>
        <strain>ATCC 204508 / S288c</strain>
    </source>
</reference>
<reference key="3">
    <citation type="journal article" date="2014" name="G3 (Bethesda)">
        <title>The reference genome sequence of Saccharomyces cerevisiae: Then and now.</title>
        <authorList>
            <person name="Engel S.R."/>
            <person name="Dietrich F.S."/>
            <person name="Fisk D.G."/>
            <person name="Binkley G."/>
            <person name="Balakrishnan R."/>
            <person name="Costanzo M.C."/>
            <person name="Dwight S.S."/>
            <person name="Hitz B.C."/>
            <person name="Karra K."/>
            <person name="Nash R.S."/>
            <person name="Weng S."/>
            <person name="Wong E.D."/>
            <person name="Lloyd P."/>
            <person name="Skrzypek M.S."/>
            <person name="Miyasato S.R."/>
            <person name="Simison M."/>
            <person name="Cherry J.M."/>
        </authorList>
    </citation>
    <scope>GENOME REANNOTATION</scope>
    <source>
        <strain>ATCC 204508 / S288c</strain>
    </source>
</reference>
<reference key="4">
    <citation type="journal article" date="2003" name="Nature">
        <title>Global analysis of protein expression in yeast.</title>
        <authorList>
            <person name="Ghaemmaghami S."/>
            <person name="Huh W.-K."/>
            <person name="Bower K."/>
            <person name="Howson R.W."/>
            <person name="Belle A."/>
            <person name="Dephoure N."/>
            <person name="O'Shea E.K."/>
            <person name="Weissman J.S."/>
        </authorList>
    </citation>
    <scope>LEVEL OF PROTEIN EXPRESSION [LARGE SCALE ANALYSIS]</scope>
</reference>
<accession>P25038</accession>
<accession>D6W242</accession>
<accession>Q12693</accession>
<name>IF2M_YEAST</name>
<sequence length="676" mass="75657">MLRRHGLFWLKTCPRLNVLLNQSIPIPHLLHSRDICQQRWYAKGKRRNQISKKELKPLNFSIPNYISVNKLANLLNCRVERLIKDLTALGFENITTTYILSKEYVELILQEYNFALPNLSTSTNLDNVYDELKSPVNPKLLTKRAPVVTIMGHVDHGKTTIIDYLRKSSVVAQEHGGITQHIGAFQITAPKSGKKITFLDTPGHAAFLKMRERGANITDIIVLVVSVEDSLMPQTLEAIKHAKNSGNEMIIAITKIDRIPQPKEREKKIEKVINDLIVQGIPVEKIGGDVQVIPISAKTGENMDLLEESIVLLSEVMDIRAENSPKTIAEGWIIESQVKKQVGNVATVLVKKGTLQKGKILICGNTFCKIKNLIDDKGIPILKATPSYATEVLGWKDVPHVGDEVIQVKSEAIAKKFISKRQDLIEVQKNSSIVEKLNEERALAKEQHLNKELEHENTVQEHEQNTGPKLINYIIKCDVSGSAEAVSESISSLGNDEVRCNVISSSVGIPTESDLKMAQITESTILCFNLGNLPSEVINNRAGIKIKQYNVIYKLIEDVTETLTENLKPIFEKKIVSTVDVRETFDFRLKKKIIRIAGCKVNNGVIKKNSLVQVVRGPNEDVIFDGKISTLKHNKDDVAEVSKGHECGITFESGFEGFKPGDKILVYENVRVPRYL</sequence>
<feature type="transit peptide" description="Mitochondrion" evidence="2">
    <location>
        <begin position="1"/>
        <end status="unknown"/>
    </location>
</feature>
<feature type="chain" id="PRO_0000014483" description="Translation initiation factor IF-2, mitochondrial">
    <location>
        <begin status="unknown"/>
        <end position="676"/>
    </location>
</feature>
<feature type="domain" description="tr-type G" evidence="3">
    <location>
        <begin position="143"/>
        <end position="326"/>
    </location>
</feature>
<feature type="region of interest" description="G1" evidence="3">
    <location>
        <begin position="152"/>
        <end position="159"/>
    </location>
</feature>
<feature type="region of interest" description="G2" evidence="3">
    <location>
        <begin position="177"/>
        <end position="181"/>
    </location>
</feature>
<feature type="region of interest" description="G3" evidence="3">
    <location>
        <begin position="200"/>
        <end position="203"/>
    </location>
</feature>
<feature type="region of interest" description="G4" evidence="3">
    <location>
        <begin position="254"/>
        <end position="257"/>
    </location>
</feature>
<feature type="region of interest" description="G5" evidence="3">
    <location>
        <begin position="296"/>
        <end position="298"/>
    </location>
</feature>
<feature type="binding site" evidence="1">
    <location>
        <begin position="152"/>
        <end position="159"/>
    </location>
    <ligand>
        <name>GTP</name>
        <dbReference type="ChEBI" id="CHEBI:37565"/>
    </ligand>
</feature>
<feature type="binding site" evidence="1">
    <location>
        <begin position="200"/>
        <end position="203"/>
    </location>
    <ligand>
        <name>GTP</name>
        <dbReference type="ChEBI" id="CHEBI:37565"/>
    </ligand>
</feature>
<feature type="binding site" evidence="1">
    <location>
        <begin position="254"/>
        <end position="257"/>
    </location>
    <ligand>
        <name>GTP</name>
        <dbReference type="ChEBI" id="CHEBI:37565"/>
    </ligand>
</feature>
<feature type="sequence conflict" description="In Ref. 1; CAA41268." evidence="5" ref="1">
    <original>H</original>
    <variation>Y</variation>
    <location>
        <position position="462"/>
    </location>
</feature>
<protein>
    <recommendedName>
        <fullName>Translation initiation factor IF-2, mitochondrial</fullName>
        <shortName>IF-2(Mt)</shortName>
        <shortName>IF-2Mt</shortName>
        <shortName>IF2(mt)</shortName>
    </recommendedName>
</protein>
<evidence type="ECO:0000250" key="1"/>
<evidence type="ECO:0000255" key="2"/>
<evidence type="ECO:0000255" key="3">
    <source>
        <dbReference type="PROSITE-ProRule" id="PRU01059"/>
    </source>
</evidence>
<evidence type="ECO:0000269" key="4">
    <source>
    </source>
</evidence>
<evidence type="ECO:0000305" key="5"/>
<comment type="function">
    <text>One of the essential components for the initiation of protein synthesis. Protects formylmethionyl-tRNA from spontaneous hydrolysis and promotes its binding to the 30S ribosomal subunits. Also involved in the hydrolysis of GTP during the formation of the 70S ribosomal complex.</text>
</comment>
<comment type="subcellular location">
    <subcellularLocation>
        <location>Mitochondrion</location>
    </subcellularLocation>
</comment>
<comment type="miscellaneous">
    <text evidence="4">Present with 1400 molecules/cell in log phase SD medium.</text>
</comment>
<comment type="similarity">
    <text evidence="3">Belongs to the TRAFAC class translation factor GTPase superfamily. Classic translation factor GTPase family. IF-2 subfamily.</text>
</comment>
<gene>
    <name type="primary">IFM1</name>
    <name type="ordered locus">YOL023W</name>
</gene>